<reference key="1">
    <citation type="journal article" date="2006" name="Proc. Natl. Acad. Sci. U.S.A.">
        <title>The partitioned Rhizobium etli genome: genetic and metabolic redundancy in seven interacting replicons.</title>
        <authorList>
            <person name="Gonzalez V."/>
            <person name="Santamaria R.I."/>
            <person name="Bustos P."/>
            <person name="Hernandez-Gonzalez I."/>
            <person name="Medrano-Soto A."/>
            <person name="Moreno-Hagelsieb G."/>
            <person name="Janga S.C."/>
            <person name="Ramirez M.A."/>
            <person name="Jimenez-Jacinto V."/>
            <person name="Collado-Vides J."/>
            <person name="Davila G."/>
        </authorList>
    </citation>
    <scope>NUCLEOTIDE SEQUENCE [LARGE SCALE GENOMIC DNA]</scope>
    <source>
        <strain>ATCC 51251 / DSM 11541 / JCM 21823 / NBRC 15573 / CFN 42</strain>
    </source>
</reference>
<protein>
    <recommendedName>
        <fullName>ATP phosphoribosyltransferase</fullName>
        <shortName>ATP-PRT</shortName>
        <shortName>ATP-PRTase</shortName>
        <ecNumber>2.4.2.17</ecNumber>
    </recommendedName>
</protein>
<sequence length="231" mass="25073">MTITIALPSKGRMKDDASAIFERAGMTITAVGNDRSYRGRVEGWDDVEVAFLSASEISRELGNGTVDFGVTGEDLMREGFAEVDKRVEFCARLGFGHADVVVAVPEIWLDVDTMADLGDVAADFRARHSRRLAIATKYWRLTQQFFSSQHGIQLYRIVESLGATEGAPAAGSADIIVDITSTGSTLRANHLKVLQDGVILHSQACLVRARKESHADEPVVQAIIDAVRAAL</sequence>
<name>HIS1_RHIEC</name>
<organism>
    <name type="scientific">Rhizobium etli (strain ATCC 51251 / DSM 11541 / JCM 21823 / NBRC 15573 / CFN 42)</name>
    <dbReference type="NCBI Taxonomy" id="347834"/>
    <lineage>
        <taxon>Bacteria</taxon>
        <taxon>Pseudomonadati</taxon>
        <taxon>Pseudomonadota</taxon>
        <taxon>Alphaproteobacteria</taxon>
        <taxon>Hyphomicrobiales</taxon>
        <taxon>Rhizobiaceae</taxon>
        <taxon>Rhizobium/Agrobacterium group</taxon>
        <taxon>Rhizobium</taxon>
    </lineage>
</organism>
<proteinExistence type="inferred from homology"/>
<comment type="function">
    <text evidence="1">Catalyzes the condensation of ATP and 5-phosphoribose 1-diphosphate to form N'-(5'-phosphoribosyl)-ATP (PR-ATP). Has a crucial role in the pathway because the rate of histidine biosynthesis seems to be controlled primarily by regulation of HisG enzymatic activity (By similarity).</text>
</comment>
<comment type="catalytic activity">
    <reaction>
        <text>1-(5-phospho-beta-D-ribosyl)-ATP + diphosphate = 5-phospho-alpha-D-ribose 1-diphosphate + ATP</text>
        <dbReference type="Rhea" id="RHEA:18473"/>
        <dbReference type="ChEBI" id="CHEBI:30616"/>
        <dbReference type="ChEBI" id="CHEBI:33019"/>
        <dbReference type="ChEBI" id="CHEBI:58017"/>
        <dbReference type="ChEBI" id="CHEBI:73183"/>
        <dbReference type="EC" id="2.4.2.17"/>
    </reaction>
</comment>
<comment type="pathway">
    <text>Amino-acid biosynthesis; L-histidine biosynthesis; L-histidine from 5-phospho-alpha-D-ribose 1-diphosphate: step 1/9.</text>
</comment>
<comment type="subunit">
    <text evidence="1">Heteromultimer composed of HisG and HisZ subunits.</text>
</comment>
<comment type="subcellular location">
    <subcellularLocation>
        <location evidence="1">Cytoplasm</location>
    </subcellularLocation>
</comment>
<comment type="domain">
    <text>Lacks the C-terminal regulatory region which is replaced by HisZ.</text>
</comment>
<comment type="similarity">
    <text evidence="2">Belongs to the ATP phosphoribosyltransferase family. Short subfamily.</text>
</comment>
<feature type="chain" id="PRO_1000063304" description="ATP phosphoribosyltransferase">
    <location>
        <begin position="1"/>
        <end position="231"/>
    </location>
</feature>
<gene>
    <name type="primary">hisG</name>
    <name type="ordered locus">RHE_CH00823</name>
</gene>
<dbReference type="EC" id="2.4.2.17"/>
<dbReference type="EMBL" id="CP000133">
    <property type="protein sequence ID" value="ABC89634.1"/>
    <property type="molecule type" value="Genomic_DNA"/>
</dbReference>
<dbReference type="RefSeq" id="WP_011424173.1">
    <property type="nucleotide sequence ID" value="NC_007761.1"/>
</dbReference>
<dbReference type="SMR" id="Q2KC02"/>
<dbReference type="KEGG" id="ret:RHE_CH00823"/>
<dbReference type="eggNOG" id="COG0040">
    <property type="taxonomic scope" value="Bacteria"/>
</dbReference>
<dbReference type="HOGENOM" id="CLU_038115_0_1_5"/>
<dbReference type="OrthoDB" id="9806435at2"/>
<dbReference type="UniPathway" id="UPA00031">
    <property type="reaction ID" value="UER00006"/>
</dbReference>
<dbReference type="Proteomes" id="UP000001936">
    <property type="component" value="Chromosome"/>
</dbReference>
<dbReference type="GO" id="GO:0005737">
    <property type="term" value="C:cytoplasm"/>
    <property type="evidence" value="ECO:0007669"/>
    <property type="project" value="UniProtKB-SubCell"/>
</dbReference>
<dbReference type="GO" id="GO:0005524">
    <property type="term" value="F:ATP binding"/>
    <property type="evidence" value="ECO:0007669"/>
    <property type="project" value="UniProtKB-KW"/>
</dbReference>
<dbReference type="GO" id="GO:0003879">
    <property type="term" value="F:ATP phosphoribosyltransferase activity"/>
    <property type="evidence" value="ECO:0007669"/>
    <property type="project" value="UniProtKB-UniRule"/>
</dbReference>
<dbReference type="GO" id="GO:0000105">
    <property type="term" value="P:L-histidine biosynthetic process"/>
    <property type="evidence" value="ECO:0007669"/>
    <property type="project" value="UniProtKB-UniRule"/>
</dbReference>
<dbReference type="CDD" id="cd13593">
    <property type="entry name" value="PBP2_HisGL3"/>
    <property type="match status" value="1"/>
</dbReference>
<dbReference type="Gene3D" id="3.40.190.10">
    <property type="entry name" value="Periplasmic binding protein-like II"/>
    <property type="match status" value="2"/>
</dbReference>
<dbReference type="InterPro" id="IPR013820">
    <property type="entry name" value="ATP_PRibTrfase_cat"/>
</dbReference>
<dbReference type="InterPro" id="IPR018198">
    <property type="entry name" value="ATP_PRibTrfase_CS"/>
</dbReference>
<dbReference type="InterPro" id="IPR001348">
    <property type="entry name" value="ATP_PRibTrfase_HisG"/>
</dbReference>
<dbReference type="InterPro" id="IPR024893">
    <property type="entry name" value="ATP_PRibTrfase_HisG_short"/>
</dbReference>
<dbReference type="NCBIfam" id="TIGR00070">
    <property type="entry name" value="hisG"/>
    <property type="match status" value="1"/>
</dbReference>
<dbReference type="PANTHER" id="PTHR21403:SF8">
    <property type="entry name" value="ATP PHOSPHORIBOSYLTRANSFERASE"/>
    <property type="match status" value="1"/>
</dbReference>
<dbReference type="PANTHER" id="PTHR21403">
    <property type="entry name" value="ATP PHOSPHORIBOSYLTRANSFERASE ATP-PRTASE"/>
    <property type="match status" value="1"/>
</dbReference>
<dbReference type="Pfam" id="PF01634">
    <property type="entry name" value="HisG"/>
    <property type="match status" value="1"/>
</dbReference>
<dbReference type="SUPFAM" id="SSF53850">
    <property type="entry name" value="Periplasmic binding protein-like II"/>
    <property type="match status" value="1"/>
</dbReference>
<dbReference type="PROSITE" id="PS01316">
    <property type="entry name" value="ATP_P_PHORIBOSYLTR"/>
    <property type="match status" value="1"/>
</dbReference>
<evidence type="ECO:0000250" key="1"/>
<evidence type="ECO:0000305" key="2"/>
<keyword id="KW-0028">Amino-acid biosynthesis</keyword>
<keyword id="KW-0067">ATP-binding</keyword>
<keyword id="KW-0963">Cytoplasm</keyword>
<keyword id="KW-0328">Glycosyltransferase</keyword>
<keyword id="KW-0368">Histidine biosynthesis</keyword>
<keyword id="KW-0547">Nucleotide-binding</keyword>
<keyword id="KW-1185">Reference proteome</keyword>
<keyword id="KW-0808">Transferase</keyword>
<accession>Q2KC02</accession>